<gene>
    <name evidence="1" type="primary">rplB</name>
    <name type="ordered locus">RC1003</name>
</gene>
<proteinExistence type="inferred from homology"/>
<protein>
    <recommendedName>
        <fullName evidence="1">Large ribosomal subunit protein uL2</fullName>
    </recommendedName>
    <alternativeName>
        <fullName evidence="3">50S ribosomal protein L2</fullName>
    </alternativeName>
</protein>
<reference key="1">
    <citation type="journal article" date="2001" name="Science">
        <title>Mechanisms of evolution in Rickettsia conorii and R. prowazekii.</title>
        <authorList>
            <person name="Ogata H."/>
            <person name="Audic S."/>
            <person name="Renesto-Audiffren P."/>
            <person name="Fournier P.-E."/>
            <person name="Barbe V."/>
            <person name="Samson D."/>
            <person name="Roux V."/>
            <person name="Cossart P."/>
            <person name="Weissenbach J."/>
            <person name="Claverie J.-M."/>
            <person name="Raoult D."/>
        </authorList>
    </citation>
    <scope>NUCLEOTIDE SEQUENCE [LARGE SCALE GENOMIC DNA]</scope>
    <source>
        <strain>ATCC VR-613 / Malish 7</strain>
    </source>
</reference>
<organism>
    <name type="scientific">Rickettsia conorii (strain ATCC VR-613 / Malish 7)</name>
    <dbReference type="NCBI Taxonomy" id="272944"/>
    <lineage>
        <taxon>Bacteria</taxon>
        <taxon>Pseudomonadati</taxon>
        <taxon>Pseudomonadota</taxon>
        <taxon>Alphaproteobacteria</taxon>
        <taxon>Rickettsiales</taxon>
        <taxon>Rickettsiaceae</taxon>
        <taxon>Rickettsieae</taxon>
        <taxon>Rickettsia</taxon>
        <taxon>spotted fever group</taxon>
    </lineage>
</organism>
<keyword id="KW-0687">Ribonucleoprotein</keyword>
<keyword id="KW-0689">Ribosomal protein</keyword>
<keyword id="KW-0694">RNA-binding</keyword>
<keyword id="KW-0699">rRNA-binding</keyword>
<sequence length="273" mass="30210">MALKNFNPITPSLRELVQVDKTSLWKGRPLKSLTKGISKTGGRNNQGRITSWHRGGGHKKLYRIIDFKRNKIDISAIVERIEYDPNRTAFIALIKYEDGEYSYILAPQKLSVGDRVISSQDADIKIGNCLPLKCIPIGTTLHNVEMKVGKGGQIARSAGTSVDLVGKDSGYAQIKLRSGEFRLVPLDCKATIGSISNPDQKNINLGKAGRNRWLGWRPHVRGVAMNPVDHPHGGGEGKTSGGRHPVTPWGFPTKGKKTRKNKRTSKFIVKKRK</sequence>
<accession>Q92GW9</accession>
<comment type="function">
    <text evidence="1">One of the primary rRNA binding proteins. Required for association of the 30S and 50S subunits to form the 70S ribosome, for tRNA binding and peptide bond formation. It has been suggested to have peptidyltransferase activity; this is somewhat controversial. Makes several contacts with the 16S rRNA in the 70S ribosome.</text>
</comment>
<comment type="subunit">
    <text evidence="1">Part of the 50S ribosomal subunit. Forms a bridge to the 30S subunit in the 70S ribosome.</text>
</comment>
<comment type="similarity">
    <text evidence="1">Belongs to the universal ribosomal protein uL2 family.</text>
</comment>
<dbReference type="EMBL" id="AE006914">
    <property type="protein sequence ID" value="AAL03541.1"/>
    <property type="molecule type" value="Genomic_DNA"/>
</dbReference>
<dbReference type="PIR" id="C97825">
    <property type="entry name" value="C97825"/>
</dbReference>
<dbReference type="RefSeq" id="WP_004997791.1">
    <property type="nucleotide sequence ID" value="NC_003103.1"/>
</dbReference>
<dbReference type="SMR" id="Q92GW9"/>
<dbReference type="GeneID" id="95361483"/>
<dbReference type="KEGG" id="rco:RC1003"/>
<dbReference type="HOGENOM" id="CLU_036235_2_1_5"/>
<dbReference type="Proteomes" id="UP000000816">
    <property type="component" value="Chromosome"/>
</dbReference>
<dbReference type="GO" id="GO:0015934">
    <property type="term" value="C:large ribosomal subunit"/>
    <property type="evidence" value="ECO:0007669"/>
    <property type="project" value="InterPro"/>
</dbReference>
<dbReference type="GO" id="GO:0019843">
    <property type="term" value="F:rRNA binding"/>
    <property type="evidence" value="ECO:0007669"/>
    <property type="project" value="UniProtKB-UniRule"/>
</dbReference>
<dbReference type="GO" id="GO:0003735">
    <property type="term" value="F:structural constituent of ribosome"/>
    <property type="evidence" value="ECO:0007669"/>
    <property type="project" value="InterPro"/>
</dbReference>
<dbReference type="GO" id="GO:0016740">
    <property type="term" value="F:transferase activity"/>
    <property type="evidence" value="ECO:0007669"/>
    <property type="project" value="InterPro"/>
</dbReference>
<dbReference type="GO" id="GO:0006412">
    <property type="term" value="P:translation"/>
    <property type="evidence" value="ECO:0007669"/>
    <property type="project" value="UniProtKB-UniRule"/>
</dbReference>
<dbReference type="FunFam" id="2.30.30.30:FF:000001">
    <property type="entry name" value="50S ribosomal protein L2"/>
    <property type="match status" value="1"/>
</dbReference>
<dbReference type="FunFam" id="2.40.50.140:FF:000003">
    <property type="entry name" value="50S ribosomal protein L2"/>
    <property type="match status" value="1"/>
</dbReference>
<dbReference type="FunFam" id="4.10.950.10:FF:000001">
    <property type="entry name" value="50S ribosomal protein L2"/>
    <property type="match status" value="1"/>
</dbReference>
<dbReference type="Gene3D" id="2.30.30.30">
    <property type="match status" value="1"/>
</dbReference>
<dbReference type="Gene3D" id="2.40.50.140">
    <property type="entry name" value="Nucleic acid-binding proteins"/>
    <property type="match status" value="1"/>
</dbReference>
<dbReference type="Gene3D" id="4.10.950.10">
    <property type="entry name" value="Ribosomal protein L2, domain 3"/>
    <property type="match status" value="1"/>
</dbReference>
<dbReference type="HAMAP" id="MF_01320_B">
    <property type="entry name" value="Ribosomal_uL2_B"/>
    <property type="match status" value="1"/>
</dbReference>
<dbReference type="InterPro" id="IPR012340">
    <property type="entry name" value="NA-bd_OB-fold"/>
</dbReference>
<dbReference type="InterPro" id="IPR014722">
    <property type="entry name" value="Rib_uL2_dom2"/>
</dbReference>
<dbReference type="InterPro" id="IPR002171">
    <property type="entry name" value="Ribosomal_uL2"/>
</dbReference>
<dbReference type="InterPro" id="IPR005880">
    <property type="entry name" value="Ribosomal_uL2_bac/org-type"/>
</dbReference>
<dbReference type="InterPro" id="IPR022669">
    <property type="entry name" value="Ribosomal_uL2_C"/>
</dbReference>
<dbReference type="InterPro" id="IPR022671">
    <property type="entry name" value="Ribosomal_uL2_CS"/>
</dbReference>
<dbReference type="InterPro" id="IPR014726">
    <property type="entry name" value="Ribosomal_uL2_dom3"/>
</dbReference>
<dbReference type="InterPro" id="IPR022666">
    <property type="entry name" value="Ribosomal_uL2_RNA-bd_dom"/>
</dbReference>
<dbReference type="InterPro" id="IPR008991">
    <property type="entry name" value="Translation_prot_SH3-like_sf"/>
</dbReference>
<dbReference type="NCBIfam" id="TIGR01171">
    <property type="entry name" value="rplB_bact"/>
    <property type="match status" value="1"/>
</dbReference>
<dbReference type="PANTHER" id="PTHR13691:SF5">
    <property type="entry name" value="LARGE RIBOSOMAL SUBUNIT PROTEIN UL2M"/>
    <property type="match status" value="1"/>
</dbReference>
<dbReference type="PANTHER" id="PTHR13691">
    <property type="entry name" value="RIBOSOMAL PROTEIN L2"/>
    <property type="match status" value="1"/>
</dbReference>
<dbReference type="Pfam" id="PF00181">
    <property type="entry name" value="Ribosomal_L2"/>
    <property type="match status" value="1"/>
</dbReference>
<dbReference type="Pfam" id="PF03947">
    <property type="entry name" value="Ribosomal_L2_C"/>
    <property type="match status" value="1"/>
</dbReference>
<dbReference type="PIRSF" id="PIRSF002158">
    <property type="entry name" value="Ribosomal_L2"/>
    <property type="match status" value="1"/>
</dbReference>
<dbReference type="SMART" id="SM01383">
    <property type="entry name" value="Ribosomal_L2"/>
    <property type="match status" value="1"/>
</dbReference>
<dbReference type="SMART" id="SM01382">
    <property type="entry name" value="Ribosomal_L2_C"/>
    <property type="match status" value="1"/>
</dbReference>
<dbReference type="SUPFAM" id="SSF50249">
    <property type="entry name" value="Nucleic acid-binding proteins"/>
    <property type="match status" value="1"/>
</dbReference>
<dbReference type="SUPFAM" id="SSF50104">
    <property type="entry name" value="Translation proteins SH3-like domain"/>
    <property type="match status" value="1"/>
</dbReference>
<dbReference type="PROSITE" id="PS00467">
    <property type="entry name" value="RIBOSOMAL_L2"/>
    <property type="match status" value="1"/>
</dbReference>
<evidence type="ECO:0000255" key="1">
    <source>
        <dbReference type="HAMAP-Rule" id="MF_01320"/>
    </source>
</evidence>
<evidence type="ECO:0000256" key="2">
    <source>
        <dbReference type="SAM" id="MobiDB-lite"/>
    </source>
</evidence>
<evidence type="ECO:0000305" key="3"/>
<name>RL2_RICCN</name>
<feature type="chain" id="PRO_0000129607" description="Large ribosomal subunit protein uL2">
    <location>
        <begin position="1"/>
        <end position="273"/>
    </location>
</feature>
<feature type="region of interest" description="Disordered" evidence="2">
    <location>
        <begin position="228"/>
        <end position="273"/>
    </location>
</feature>
<feature type="compositionally biased region" description="Basic residues" evidence="2">
    <location>
        <begin position="254"/>
        <end position="273"/>
    </location>
</feature>